<dbReference type="EMBL" id="CU329670">
    <property type="protein sequence ID" value="CAB54825.1"/>
    <property type="molecule type" value="Genomic_DNA"/>
</dbReference>
<dbReference type="PIR" id="T37560">
    <property type="entry name" value="T37560"/>
</dbReference>
<dbReference type="RefSeq" id="NP_594860.1">
    <property type="nucleotide sequence ID" value="NM_001020289.2"/>
</dbReference>
<dbReference type="BioGRID" id="279450">
    <property type="interactions" value="1"/>
</dbReference>
<dbReference type="PaxDb" id="4896-SPAC1250.02.1"/>
<dbReference type="EnsemblFungi" id="SPAC1250.02.1">
    <property type="protein sequence ID" value="SPAC1250.02.1:pep"/>
    <property type="gene ID" value="SPAC1250.02"/>
</dbReference>
<dbReference type="GeneID" id="2543012"/>
<dbReference type="KEGG" id="spo:2543012"/>
<dbReference type="PomBase" id="SPAC1250.02">
    <property type="gene designation" value="mug95"/>
</dbReference>
<dbReference type="VEuPathDB" id="FungiDB:SPAC1250.02"/>
<dbReference type="HOGENOM" id="CLU_1511438_0_0_1"/>
<dbReference type="InParanoid" id="Q9UTN7"/>
<dbReference type="PRO" id="PR:Q9UTN7"/>
<dbReference type="Proteomes" id="UP000002485">
    <property type="component" value="Chromosome I"/>
</dbReference>
<dbReference type="GO" id="GO:0005783">
    <property type="term" value="C:endoplasmic reticulum"/>
    <property type="evidence" value="ECO:0007005"/>
    <property type="project" value="PomBase"/>
</dbReference>
<dbReference type="GO" id="GO:0005789">
    <property type="term" value="C:endoplasmic reticulum membrane"/>
    <property type="evidence" value="ECO:0007669"/>
    <property type="project" value="UniProtKB-SubCell"/>
</dbReference>
<protein>
    <recommendedName>
        <fullName>Meiotically up-regulated gene 95 protein</fullName>
    </recommendedName>
</protein>
<reference key="1">
    <citation type="journal article" date="2002" name="Nature">
        <title>The genome sequence of Schizosaccharomyces pombe.</title>
        <authorList>
            <person name="Wood V."/>
            <person name="Gwilliam R."/>
            <person name="Rajandream M.A."/>
            <person name="Lyne M.H."/>
            <person name="Lyne R."/>
            <person name="Stewart A."/>
            <person name="Sgouros J.G."/>
            <person name="Peat N."/>
            <person name="Hayles J."/>
            <person name="Baker S.G."/>
            <person name="Basham D."/>
            <person name="Bowman S."/>
            <person name="Brooks K."/>
            <person name="Brown D."/>
            <person name="Brown S."/>
            <person name="Chillingworth T."/>
            <person name="Churcher C.M."/>
            <person name="Collins M."/>
            <person name="Connor R."/>
            <person name="Cronin A."/>
            <person name="Davis P."/>
            <person name="Feltwell T."/>
            <person name="Fraser A."/>
            <person name="Gentles S."/>
            <person name="Goble A."/>
            <person name="Hamlin N."/>
            <person name="Harris D.E."/>
            <person name="Hidalgo J."/>
            <person name="Hodgson G."/>
            <person name="Holroyd S."/>
            <person name="Hornsby T."/>
            <person name="Howarth S."/>
            <person name="Huckle E.J."/>
            <person name="Hunt S."/>
            <person name="Jagels K."/>
            <person name="James K.D."/>
            <person name="Jones L."/>
            <person name="Jones M."/>
            <person name="Leather S."/>
            <person name="McDonald S."/>
            <person name="McLean J."/>
            <person name="Mooney P."/>
            <person name="Moule S."/>
            <person name="Mungall K.L."/>
            <person name="Murphy L.D."/>
            <person name="Niblett D."/>
            <person name="Odell C."/>
            <person name="Oliver K."/>
            <person name="O'Neil S."/>
            <person name="Pearson D."/>
            <person name="Quail M.A."/>
            <person name="Rabbinowitsch E."/>
            <person name="Rutherford K.M."/>
            <person name="Rutter S."/>
            <person name="Saunders D."/>
            <person name="Seeger K."/>
            <person name="Sharp S."/>
            <person name="Skelton J."/>
            <person name="Simmonds M.N."/>
            <person name="Squares R."/>
            <person name="Squares S."/>
            <person name="Stevens K."/>
            <person name="Taylor K."/>
            <person name="Taylor R.G."/>
            <person name="Tivey A."/>
            <person name="Walsh S.V."/>
            <person name="Warren T."/>
            <person name="Whitehead S."/>
            <person name="Woodward J.R."/>
            <person name="Volckaert G."/>
            <person name="Aert R."/>
            <person name="Robben J."/>
            <person name="Grymonprez B."/>
            <person name="Weltjens I."/>
            <person name="Vanstreels E."/>
            <person name="Rieger M."/>
            <person name="Schaefer M."/>
            <person name="Mueller-Auer S."/>
            <person name="Gabel C."/>
            <person name="Fuchs M."/>
            <person name="Duesterhoeft A."/>
            <person name="Fritzc C."/>
            <person name="Holzer E."/>
            <person name="Moestl D."/>
            <person name="Hilbert H."/>
            <person name="Borzym K."/>
            <person name="Langer I."/>
            <person name="Beck A."/>
            <person name="Lehrach H."/>
            <person name="Reinhardt R."/>
            <person name="Pohl T.M."/>
            <person name="Eger P."/>
            <person name="Zimmermann W."/>
            <person name="Wedler H."/>
            <person name="Wambutt R."/>
            <person name="Purnelle B."/>
            <person name="Goffeau A."/>
            <person name="Cadieu E."/>
            <person name="Dreano S."/>
            <person name="Gloux S."/>
            <person name="Lelaure V."/>
            <person name="Mottier S."/>
            <person name="Galibert F."/>
            <person name="Aves S.J."/>
            <person name="Xiang Z."/>
            <person name="Hunt C."/>
            <person name="Moore K."/>
            <person name="Hurst S.M."/>
            <person name="Lucas M."/>
            <person name="Rochet M."/>
            <person name="Gaillardin C."/>
            <person name="Tallada V.A."/>
            <person name="Garzon A."/>
            <person name="Thode G."/>
            <person name="Daga R.R."/>
            <person name="Cruzado L."/>
            <person name="Jimenez J."/>
            <person name="Sanchez M."/>
            <person name="del Rey F."/>
            <person name="Benito J."/>
            <person name="Dominguez A."/>
            <person name="Revuelta J.L."/>
            <person name="Moreno S."/>
            <person name="Armstrong J."/>
            <person name="Forsburg S.L."/>
            <person name="Cerutti L."/>
            <person name="Lowe T."/>
            <person name="McCombie W.R."/>
            <person name="Paulsen I."/>
            <person name="Potashkin J."/>
            <person name="Shpakovski G.V."/>
            <person name="Ussery D."/>
            <person name="Barrell B.G."/>
            <person name="Nurse P."/>
        </authorList>
    </citation>
    <scope>NUCLEOTIDE SEQUENCE [LARGE SCALE GENOMIC DNA]</scope>
    <source>
        <strain>972 / ATCC 24843</strain>
    </source>
</reference>
<reference key="2">
    <citation type="journal article" date="2005" name="Curr. Biol.">
        <title>A large-scale screen in S. pombe identifies seven novel genes required for critical meiotic events.</title>
        <authorList>
            <person name="Martin-Castellanos C."/>
            <person name="Blanco M."/>
            <person name="Rozalen A.E."/>
            <person name="Perez-Hidalgo L."/>
            <person name="Garcia A.I."/>
            <person name="Conde F."/>
            <person name="Mata J."/>
            <person name="Ellermeier C."/>
            <person name="Davis L."/>
            <person name="San-Segundo P."/>
            <person name="Smith G.R."/>
            <person name="Moreno S."/>
        </authorList>
    </citation>
    <scope>FUNCTION IN MEIOSIS</scope>
</reference>
<reference key="3">
    <citation type="journal article" date="2006" name="Nat. Biotechnol.">
        <title>ORFeome cloning and global analysis of protein localization in the fission yeast Schizosaccharomyces pombe.</title>
        <authorList>
            <person name="Matsuyama A."/>
            <person name="Arai R."/>
            <person name="Yashiroda Y."/>
            <person name="Shirai A."/>
            <person name="Kamata A."/>
            <person name="Sekido S."/>
            <person name="Kobayashi Y."/>
            <person name="Hashimoto A."/>
            <person name="Hamamoto M."/>
            <person name="Hiraoka Y."/>
            <person name="Horinouchi S."/>
            <person name="Yoshida M."/>
        </authorList>
    </citation>
    <scope>SUBCELLULAR LOCATION [LARGE SCALE ANALYSIS]</scope>
</reference>
<accession>Q9UTN7</accession>
<evidence type="ECO:0000255" key="1"/>
<evidence type="ECO:0000269" key="2">
    <source>
    </source>
</evidence>
<evidence type="ECO:0000269" key="3">
    <source>
    </source>
</evidence>
<name>MUG95_SCHPO</name>
<proteinExistence type="evidence at protein level"/>
<feature type="chain" id="PRO_0000278616" description="Meiotically up-regulated gene 95 protein">
    <location>
        <begin position="1"/>
        <end position="178"/>
    </location>
</feature>
<feature type="topological domain" description="Cytoplasmic" evidence="1">
    <location>
        <begin position="1"/>
        <end position="12"/>
    </location>
</feature>
<feature type="transmembrane region" description="Helical; Signal-anchor for type II membrane protein" evidence="1">
    <location>
        <begin position="13"/>
        <end position="30"/>
    </location>
</feature>
<feature type="topological domain" description="Lumenal" evidence="1">
    <location>
        <begin position="31"/>
        <end position="178"/>
    </location>
</feature>
<organism>
    <name type="scientific">Schizosaccharomyces pombe (strain 972 / ATCC 24843)</name>
    <name type="common">Fission yeast</name>
    <dbReference type="NCBI Taxonomy" id="284812"/>
    <lineage>
        <taxon>Eukaryota</taxon>
        <taxon>Fungi</taxon>
        <taxon>Dikarya</taxon>
        <taxon>Ascomycota</taxon>
        <taxon>Taphrinomycotina</taxon>
        <taxon>Schizosaccharomycetes</taxon>
        <taxon>Schizosaccharomycetales</taxon>
        <taxon>Schizosaccharomycetaceae</taxon>
        <taxon>Schizosaccharomyces</taxon>
    </lineage>
</organism>
<sequence>MNLFVYIAQNPTLTKWFFCCVCTILTMPFFKKPYRKRGISRTPYEWLTYADKCVIELSKSELKPNEEKELPKDIKEDCKTVEEKEKVVPRKPLQSEGINEDDSQKNGELIVLHGINHQAAMLTACGLFMVTSSNTNKWKIAFASFLLGMFFTQFGFQKSERSINAEKLESIEKPENDN</sequence>
<keyword id="KW-0256">Endoplasmic reticulum</keyword>
<keyword id="KW-0472">Membrane</keyword>
<keyword id="KW-1185">Reference proteome</keyword>
<keyword id="KW-0735">Signal-anchor</keyword>
<keyword id="KW-0812">Transmembrane</keyword>
<keyword id="KW-1133">Transmembrane helix</keyword>
<gene>
    <name type="primary">mug95</name>
    <name type="ORF">SPAC1250.02</name>
</gene>
<comment type="function">
    <text evidence="2">Has a role in meiosis.</text>
</comment>
<comment type="subcellular location">
    <subcellularLocation>
        <location evidence="3">Endoplasmic reticulum membrane</location>
        <topology evidence="3">Single-pass type II membrane protein</topology>
    </subcellularLocation>
</comment>